<gene>
    <name evidence="1" type="primary">kdpC</name>
    <name type="ordered locus">ECIAI1_0672</name>
</gene>
<evidence type="ECO:0000255" key="1">
    <source>
        <dbReference type="HAMAP-Rule" id="MF_00276"/>
    </source>
</evidence>
<reference key="1">
    <citation type="journal article" date="2009" name="PLoS Genet.">
        <title>Organised genome dynamics in the Escherichia coli species results in highly diverse adaptive paths.</title>
        <authorList>
            <person name="Touchon M."/>
            <person name="Hoede C."/>
            <person name="Tenaillon O."/>
            <person name="Barbe V."/>
            <person name="Baeriswyl S."/>
            <person name="Bidet P."/>
            <person name="Bingen E."/>
            <person name="Bonacorsi S."/>
            <person name="Bouchier C."/>
            <person name="Bouvet O."/>
            <person name="Calteau A."/>
            <person name="Chiapello H."/>
            <person name="Clermont O."/>
            <person name="Cruveiller S."/>
            <person name="Danchin A."/>
            <person name="Diard M."/>
            <person name="Dossat C."/>
            <person name="Karoui M.E."/>
            <person name="Frapy E."/>
            <person name="Garry L."/>
            <person name="Ghigo J.M."/>
            <person name="Gilles A.M."/>
            <person name="Johnson J."/>
            <person name="Le Bouguenec C."/>
            <person name="Lescat M."/>
            <person name="Mangenot S."/>
            <person name="Martinez-Jehanne V."/>
            <person name="Matic I."/>
            <person name="Nassif X."/>
            <person name="Oztas S."/>
            <person name="Petit M.A."/>
            <person name="Pichon C."/>
            <person name="Rouy Z."/>
            <person name="Ruf C.S."/>
            <person name="Schneider D."/>
            <person name="Tourret J."/>
            <person name="Vacherie B."/>
            <person name="Vallenet D."/>
            <person name="Medigue C."/>
            <person name="Rocha E.P.C."/>
            <person name="Denamur E."/>
        </authorList>
    </citation>
    <scope>NUCLEOTIDE SEQUENCE [LARGE SCALE GENOMIC DNA]</scope>
    <source>
        <strain>IAI1</strain>
    </source>
</reference>
<proteinExistence type="inferred from homology"/>
<keyword id="KW-0067">ATP-binding</keyword>
<keyword id="KW-0997">Cell inner membrane</keyword>
<keyword id="KW-1003">Cell membrane</keyword>
<keyword id="KW-0406">Ion transport</keyword>
<keyword id="KW-0472">Membrane</keyword>
<keyword id="KW-0547">Nucleotide-binding</keyword>
<keyword id="KW-0630">Potassium</keyword>
<keyword id="KW-0633">Potassium transport</keyword>
<keyword id="KW-0812">Transmembrane</keyword>
<keyword id="KW-1133">Transmembrane helix</keyword>
<keyword id="KW-0813">Transport</keyword>
<comment type="function">
    <text evidence="1">Part of the high-affinity ATP-driven potassium transport (or Kdp) system, which catalyzes the hydrolysis of ATP coupled with the electrogenic transport of potassium into the cytoplasm. This subunit acts as a catalytic chaperone that increases the ATP-binding affinity of the ATP-hydrolyzing subunit KdpB by the formation of a transient KdpB/KdpC/ATP ternary complex.</text>
</comment>
<comment type="subunit">
    <text evidence="1">The system is composed of three essential subunits: KdpA, KdpB and KdpC.</text>
</comment>
<comment type="subcellular location">
    <subcellularLocation>
        <location evidence="1">Cell inner membrane</location>
        <topology evidence="1">Single-pass membrane protein</topology>
    </subcellularLocation>
</comment>
<comment type="similarity">
    <text evidence="1">Belongs to the KdpC family.</text>
</comment>
<dbReference type="EMBL" id="CU928160">
    <property type="protein sequence ID" value="CAQ97540.1"/>
    <property type="molecule type" value="Genomic_DNA"/>
</dbReference>
<dbReference type="RefSeq" id="WP_001344323.1">
    <property type="nucleotide sequence ID" value="NC_011741.1"/>
</dbReference>
<dbReference type="SMR" id="B7M5L2"/>
<dbReference type="KEGG" id="ecr:ECIAI1_0672"/>
<dbReference type="HOGENOM" id="CLU_077094_2_0_6"/>
<dbReference type="GO" id="GO:0005886">
    <property type="term" value="C:plasma membrane"/>
    <property type="evidence" value="ECO:0007669"/>
    <property type="project" value="UniProtKB-SubCell"/>
</dbReference>
<dbReference type="GO" id="GO:0005524">
    <property type="term" value="F:ATP binding"/>
    <property type="evidence" value="ECO:0007669"/>
    <property type="project" value="UniProtKB-UniRule"/>
</dbReference>
<dbReference type="GO" id="GO:0008556">
    <property type="term" value="F:P-type potassium transmembrane transporter activity"/>
    <property type="evidence" value="ECO:0007669"/>
    <property type="project" value="InterPro"/>
</dbReference>
<dbReference type="HAMAP" id="MF_00276">
    <property type="entry name" value="KdpC"/>
    <property type="match status" value="1"/>
</dbReference>
<dbReference type="InterPro" id="IPR003820">
    <property type="entry name" value="KdpC"/>
</dbReference>
<dbReference type="NCBIfam" id="TIGR00681">
    <property type="entry name" value="kdpC"/>
    <property type="match status" value="1"/>
</dbReference>
<dbReference type="NCBIfam" id="NF001454">
    <property type="entry name" value="PRK00315.1"/>
    <property type="match status" value="1"/>
</dbReference>
<dbReference type="PANTHER" id="PTHR30042">
    <property type="entry name" value="POTASSIUM-TRANSPORTING ATPASE C CHAIN"/>
    <property type="match status" value="1"/>
</dbReference>
<dbReference type="PANTHER" id="PTHR30042:SF2">
    <property type="entry name" value="POTASSIUM-TRANSPORTING ATPASE KDPC SUBUNIT"/>
    <property type="match status" value="1"/>
</dbReference>
<dbReference type="Pfam" id="PF02669">
    <property type="entry name" value="KdpC"/>
    <property type="match status" value="1"/>
</dbReference>
<dbReference type="PIRSF" id="PIRSF001296">
    <property type="entry name" value="K_ATPase_KdpC"/>
    <property type="match status" value="1"/>
</dbReference>
<name>KDPC_ECO8A</name>
<accession>B7M5L2</accession>
<protein>
    <recommendedName>
        <fullName evidence="1">Potassium-transporting ATPase KdpC subunit</fullName>
    </recommendedName>
    <alternativeName>
        <fullName evidence="1">ATP phosphohydrolase [potassium-transporting] C chain</fullName>
    </alternativeName>
    <alternativeName>
        <fullName evidence="1">Potassium-binding and translocating subunit C</fullName>
    </alternativeName>
    <alternativeName>
        <fullName evidence="1">Potassium-translocating ATPase C chain</fullName>
    </alternativeName>
</protein>
<feature type="chain" id="PRO_1000119354" description="Potassium-transporting ATPase KdpC subunit">
    <location>
        <begin position="1"/>
        <end position="190"/>
    </location>
</feature>
<feature type="transmembrane region" description="Helical" evidence="1">
    <location>
        <begin position="10"/>
        <end position="30"/>
    </location>
</feature>
<sequence length="190" mass="20363">MRGLRPALSTFIFLLLITGGVYPLLTTVLGQWWFPWQANGSLIREGDTVRGSALIGQNFTGNGYFHGRPSATAEMPYNPQASGGSNLAVSNPELDKLIAARVAALRAANPDASASIPVELVTASASGLDNNITPQAAAWQIPRIAKARNLSVEQLTQLIAKYSQQPLVKYIGQPVVNIVKLNLALDKLDE</sequence>
<organism>
    <name type="scientific">Escherichia coli O8 (strain IAI1)</name>
    <dbReference type="NCBI Taxonomy" id="585034"/>
    <lineage>
        <taxon>Bacteria</taxon>
        <taxon>Pseudomonadati</taxon>
        <taxon>Pseudomonadota</taxon>
        <taxon>Gammaproteobacteria</taxon>
        <taxon>Enterobacterales</taxon>
        <taxon>Enterobacteriaceae</taxon>
        <taxon>Escherichia</taxon>
    </lineage>
</organism>